<feature type="chain" id="PRO_1000021484" description="Ribonuclease P protein component">
    <location>
        <begin position="1"/>
        <end position="122"/>
    </location>
</feature>
<protein>
    <recommendedName>
        <fullName evidence="1">Ribonuclease P protein component</fullName>
        <shortName evidence="1">RNase P protein</shortName>
        <shortName evidence="1">RNaseP protein</shortName>
        <ecNumber evidence="1">3.1.26.5</ecNumber>
    </recommendedName>
    <alternativeName>
        <fullName evidence="1">Protein C5</fullName>
    </alternativeName>
</protein>
<comment type="function">
    <text evidence="1">RNaseP catalyzes the removal of the 5'-leader sequence from pre-tRNA to produce the mature 5'-terminus. It can also cleave other RNA substrates such as 4.5S RNA. The protein component plays an auxiliary but essential role in vivo by binding to the 5'-leader sequence and broadening the substrate specificity of the ribozyme.</text>
</comment>
<comment type="catalytic activity">
    <reaction evidence="1">
        <text>Endonucleolytic cleavage of RNA, removing 5'-extranucleotides from tRNA precursor.</text>
        <dbReference type="EC" id="3.1.26.5"/>
    </reaction>
</comment>
<comment type="subunit">
    <text evidence="1">Consists of a catalytic RNA component (M1 or rnpB) and a protein subunit.</text>
</comment>
<comment type="similarity">
    <text evidence="1">Belongs to the RnpA family.</text>
</comment>
<gene>
    <name evidence="1" type="primary">rnpA</name>
    <name type="ordered locus">Synpcc7942_1615</name>
</gene>
<reference key="1">
    <citation type="submission" date="2005-08" db="EMBL/GenBank/DDBJ databases">
        <title>Complete sequence of chromosome 1 of Synechococcus elongatus PCC 7942.</title>
        <authorList>
            <consortium name="US DOE Joint Genome Institute"/>
            <person name="Copeland A."/>
            <person name="Lucas S."/>
            <person name="Lapidus A."/>
            <person name="Barry K."/>
            <person name="Detter J.C."/>
            <person name="Glavina T."/>
            <person name="Hammon N."/>
            <person name="Israni S."/>
            <person name="Pitluck S."/>
            <person name="Schmutz J."/>
            <person name="Larimer F."/>
            <person name="Land M."/>
            <person name="Kyrpides N."/>
            <person name="Lykidis A."/>
            <person name="Golden S."/>
            <person name="Richardson P."/>
        </authorList>
    </citation>
    <scope>NUCLEOTIDE SEQUENCE [LARGE SCALE GENOMIC DNA]</scope>
    <source>
        <strain>ATCC 33912 / PCC 7942 / FACHB-805</strain>
    </source>
</reference>
<evidence type="ECO:0000255" key="1">
    <source>
        <dbReference type="HAMAP-Rule" id="MF_00227"/>
    </source>
</evidence>
<proteinExistence type="inferred from homology"/>
<name>RNPA_SYNE7</name>
<sequence>MALPRCHRLRQRDRFPALYRGGRKLSTPSLLLRWLPQAEIESVNESRFAIVISLKVHKRAVRRNRLRRRLQAALLRLRDRLRPGFDGLLTVKPGLDLDTSTSQFLQELEDLLTRAEIIHGRQ</sequence>
<keyword id="KW-0255">Endonuclease</keyword>
<keyword id="KW-0378">Hydrolase</keyword>
<keyword id="KW-0540">Nuclease</keyword>
<keyword id="KW-1185">Reference proteome</keyword>
<keyword id="KW-0694">RNA-binding</keyword>
<keyword id="KW-0819">tRNA processing</keyword>
<organism>
    <name type="scientific">Synechococcus elongatus (strain ATCC 33912 / PCC 7942 / FACHB-805)</name>
    <name type="common">Anacystis nidulans R2</name>
    <dbReference type="NCBI Taxonomy" id="1140"/>
    <lineage>
        <taxon>Bacteria</taxon>
        <taxon>Bacillati</taxon>
        <taxon>Cyanobacteriota</taxon>
        <taxon>Cyanophyceae</taxon>
        <taxon>Synechococcales</taxon>
        <taxon>Synechococcaceae</taxon>
        <taxon>Synechococcus</taxon>
    </lineage>
</organism>
<accession>Q31MS4</accession>
<dbReference type="EC" id="3.1.26.5" evidence="1"/>
<dbReference type="EMBL" id="CP000100">
    <property type="protein sequence ID" value="ABB57645.1"/>
    <property type="molecule type" value="Genomic_DNA"/>
</dbReference>
<dbReference type="RefSeq" id="WP_011242385.1">
    <property type="nucleotide sequence ID" value="NZ_JACJTX010000004.1"/>
</dbReference>
<dbReference type="SMR" id="Q31MS4"/>
<dbReference type="STRING" id="1140.Synpcc7942_1615"/>
<dbReference type="PaxDb" id="1140-Synpcc7942_1615"/>
<dbReference type="GeneID" id="72430346"/>
<dbReference type="KEGG" id="syf:Synpcc7942_1615"/>
<dbReference type="eggNOG" id="COG0594">
    <property type="taxonomic scope" value="Bacteria"/>
</dbReference>
<dbReference type="HOGENOM" id="CLU_117179_9_0_3"/>
<dbReference type="OrthoDB" id="540358at2"/>
<dbReference type="BioCyc" id="SYNEL:SYNPCC7942_1615-MONOMER"/>
<dbReference type="Proteomes" id="UP000889800">
    <property type="component" value="Chromosome"/>
</dbReference>
<dbReference type="GO" id="GO:0030677">
    <property type="term" value="C:ribonuclease P complex"/>
    <property type="evidence" value="ECO:0007669"/>
    <property type="project" value="TreeGrafter"/>
</dbReference>
<dbReference type="GO" id="GO:0042781">
    <property type="term" value="F:3'-tRNA processing endoribonuclease activity"/>
    <property type="evidence" value="ECO:0007669"/>
    <property type="project" value="TreeGrafter"/>
</dbReference>
<dbReference type="GO" id="GO:0004526">
    <property type="term" value="F:ribonuclease P activity"/>
    <property type="evidence" value="ECO:0007669"/>
    <property type="project" value="UniProtKB-UniRule"/>
</dbReference>
<dbReference type="GO" id="GO:0000049">
    <property type="term" value="F:tRNA binding"/>
    <property type="evidence" value="ECO:0007669"/>
    <property type="project" value="UniProtKB-UniRule"/>
</dbReference>
<dbReference type="GO" id="GO:0001682">
    <property type="term" value="P:tRNA 5'-leader removal"/>
    <property type="evidence" value="ECO:0007669"/>
    <property type="project" value="UniProtKB-UniRule"/>
</dbReference>
<dbReference type="Gene3D" id="3.30.230.10">
    <property type="match status" value="1"/>
</dbReference>
<dbReference type="HAMAP" id="MF_00227">
    <property type="entry name" value="RNase_P"/>
    <property type="match status" value="1"/>
</dbReference>
<dbReference type="InterPro" id="IPR020568">
    <property type="entry name" value="Ribosomal_Su5_D2-typ_SF"/>
</dbReference>
<dbReference type="InterPro" id="IPR014721">
    <property type="entry name" value="Ribsml_uS5_D2-typ_fold_subgr"/>
</dbReference>
<dbReference type="InterPro" id="IPR000100">
    <property type="entry name" value="RNase_P"/>
</dbReference>
<dbReference type="NCBIfam" id="TIGR00188">
    <property type="entry name" value="rnpA"/>
    <property type="match status" value="1"/>
</dbReference>
<dbReference type="PANTHER" id="PTHR33992">
    <property type="entry name" value="RIBONUCLEASE P PROTEIN COMPONENT"/>
    <property type="match status" value="1"/>
</dbReference>
<dbReference type="PANTHER" id="PTHR33992:SF1">
    <property type="entry name" value="RIBONUCLEASE P PROTEIN COMPONENT"/>
    <property type="match status" value="1"/>
</dbReference>
<dbReference type="Pfam" id="PF00825">
    <property type="entry name" value="Ribonuclease_P"/>
    <property type="match status" value="1"/>
</dbReference>
<dbReference type="SUPFAM" id="SSF54211">
    <property type="entry name" value="Ribosomal protein S5 domain 2-like"/>
    <property type="match status" value="1"/>
</dbReference>